<keyword id="KW-0256">Endoplasmic reticulum</keyword>
<keyword id="KW-0472">Membrane</keyword>
<keyword id="KW-1185">Reference proteome</keyword>
<keyword id="KW-0812">Transmembrane</keyword>
<keyword id="KW-1133">Transmembrane helix</keyword>
<gene>
    <name type="primary">DER2</name>
    <name type="ordered locus">Os03g0852200</name>
    <name type="ordered locus">LOC_Os03g63520</name>
    <name type="ORF">OSJNBa0015N08.24</name>
</gene>
<comment type="function">
    <text evidence="1">May be involved in the degradation process of specific misfolded endoplasmic reticulum (ER) luminal proteins.</text>
</comment>
<comment type="subcellular location">
    <subcellularLocation>
        <location evidence="1">Endoplasmic reticulum membrane</location>
        <topology evidence="1">Multi-pass membrane protein</topology>
    </subcellularLocation>
</comment>
<comment type="similarity">
    <text evidence="3">Belongs to the derlin family.</text>
</comment>
<proteinExistence type="evidence at transcript level"/>
<accession>Q851X7</accession>
<accession>Q0DLQ3</accession>
<feature type="chain" id="PRO_0000249245" description="Derlin-2">
    <location>
        <begin position="1"/>
        <end position="249"/>
    </location>
</feature>
<feature type="topological domain" description="Cytoplasmic" evidence="2">
    <location>
        <begin position="1"/>
        <end position="21"/>
    </location>
</feature>
<feature type="transmembrane region" description="Helical; Name=1" evidence="2">
    <location>
        <begin position="22"/>
        <end position="42"/>
    </location>
</feature>
<feature type="topological domain" description="Lumenal" evidence="2">
    <location>
        <begin position="43"/>
        <end position="96"/>
    </location>
</feature>
<feature type="transmembrane region" description="Helical; Name=2" evidence="2">
    <location>
        <begin position="97"/>
        <end position="117"/>
    </location>
</feature>
<feature type="topological domain" description="Cytoplasmic" evidence="2">
    <location>
        <begin position="118"/>
        <end position="122"/>
    </location>
</feature>
<feature type="transmembrane region" description="Helical; Name=3" evidence="2">
    <location>
        <begin position="123"/>
        <end position="143"/>
    </location>
</feature>
<feature type="topological domain" description="Lumenal" evidence="2">
    <location>
        <begin position="144"/>
        <end position="152"/>
    </location>
</feature>
<feature type="transmembrane region" description="Helical; Name=4" evidence="2">
    <location>
        <begin position="153"/>
        <end position="173"/>
    </location>
</feature>
<feature type="topological domain" description="Cytoplasmic" evidence="2">
    <location>
        <begin position="174"/>
        <end position="249"/>
    </location>
</feature>
<evidence type="ECO:0000250" key="1"/>
<evidence type="ECO:0000255" key="2"/>
<evidence type="ECO:0000305" key="3"/>
<sequence>MAQAVEEWYRQMPIITRSYLTAAVVTTVGCTLEIISPYHLYLNPKLVVQHYEIWRLVTNFLYFRKMDLDFLFHMFFLARYCKLLEENSFRGRTADFFYMLLFGATVLTGIVLIGGMIPYISETFARILFLSNSLTFMMVYVWSKHNPFIHMSFLGLFTFTAAYLPWVLLGFSILVGSSTWVDLLGMIAGHVYYFLEDVYPRMTGRRPLKTPSFIKALFADDNVVVARPPNAGLGAGARFGAMGADPQAQ</sequence>
<dbReference type="EMBL" id="AC096688">
    <property type="protein sequence ID" value="AAO20072.1"/>
    <property type="molecule type" value="Genomic_DNA"/>
</dbReference>
<dbReference type="EMBL" id="DP000009">
    <property type="protein sequence ID" value="ABF99939.1"/>
    <property type="molecule type" value="Genomic_DNA"/>
</dbReference>
<dbReference type="EMBL" id="AP008209">
    <property type="protein sequence ID" value="BAF13835.1"/>
    <property type="molecule type" value="Genomic_DNA"/>
</dbReference>
<dbReference type="EMBL" id="AP014959">
    <property type="protein sequence ID" value="BAS87400.1"/>
    <property type="molecule type" value="Genomic_DNA"/>
</dbReference>
<dbReference type="EMBL" id="AK068059">
    <property type="protein sequence ID" value="BAG90737.1"/>
    <property type="molecule type" value="mRNA"/>
</dbReference>
<dbReference type="RefSeq" id="XP_015627921.1">
    <property type="nucleotide sequence ID" value="XM_015772435.1"/>
</dbReference>
<dbReference type="SMR" id="Q851X7"/>
<dbReference type="FunCoup" id="Q851X7">
    <property type="interactions" value="2672"/>
</dbReference>
<dbReference type="STRING" id="39947.Q851X7"/>
<dbReference type="PaxDb" id="39947-Q851X7"/>
<dbReference type="EnsemblPlants" id="Os03t0852200-01">
    <property type="protein sequence ID" value="Os03t0852200-01"/>
    <property type="gene ID" value="Os03g0852200"/>
</dbReference>
<dbReference type="Gramene" id="Os03t0852200-01">
    <property type="protein sequence ID" value="Os03t0852200-01"/>
    <property type="gene ID" value="Os03g0852200"/>
</dbReference>
<dbReference type="KEGG" id="dosa:Os03g0852200"/>
<dbReference type="eggNOG" id="KOG0858">
    <property type="taxonomic scope" value="Eukaryota"/>
</dbReference>
<dbReference type="HOGENOM" id="CLU_051898_5_2_1"/>
<dbReference type="InParanoid" id="Q851X7"/>
<dbReference type="OMA" id="FKSQYWR"/>
<dbReference type="OrthoDB" id="1716531at2759"/>
<dbReference type="Proteomes" id="UP000000763">
    <property type="component" value="Chromosome 3"/>
</dbReference>
<dbReference type="Proteomes" id="UP000059680">
    <property type="component" value="Chromosome 3"/>
</dbReference>
<dbReference type="GO" id="GO:0005789">
    <property type="term" value="C:endoplasmic reticulum membrane"/>
    <property type="evidence" value="ECO:0000318"/>
    <property type="project" value="GO_Central"/>
</dbReference>
<dbReference type="GO" id="GO:0005047">
    <property type="term" value="F:signal recognition particle binding"/>
    <property type="evidence" value="ECO:0000318"/>
    <property type="project" value="GO_Central"/>
</dbReference>
<dbReference type="GO" id="GO:0030968">
    <property type="term" value="P:endoplasmic reticulum unfolded protein response"/>
    <property type="evidence" value="ECO:0000318"/>
    <property type="project" value="GO_Central"/>
</dbReference>
<dbReference type="GO" id="GO:0036503">
    <property type="term" value="P:ERAD pathway"/>
    <property type="evidence" value="ECO:0000318"/>
    <property type="project" value="GO_Central"/>
</dbReference>
<dbReference type="FunFam" id="1.20.1540.10:FF:000016">
    <property type="entry name" value="Derlin"/>
    <property type="match status" value="1"/>
</dbReference>
<dbReference type="InterPro" id="IPR007599">
    <property type="entry name" value="DER1"/>
</dbReference>
<dbReference type="InterPro" id="IPR035952">
    <property type="entry name" value="Rhomboid-like_sf"/>
</dbReference>
<dbReference type="PANTHER" id="PTHR11009">
    <property type="entry name" value="DER1-LIKE PROTEIN, DERLIN"/>
    <property type="match status" value="1"/>
</dbReference>
<dbReference type="Pfam" id="PF04511">
    <property type="entry name" value="DER1"/>
    <property type="match status" value="1"/>
</dbReference>
<dbReference type="SUPFAM" id="SSF144091">
    <property type="entry name" value="Rhomboid-like"/>
    <property type="match status" value="1"/>
</dbReference>
<name>DERL2_ORYSJ</name>
<protein>
    <recommendedName>
        <fullName>Derlin-2</fullName>
    </recommendedName>
    <alternativeName>
        <fullName>OsDerlin 2-1</fullName>
    </alternativeName>
</protein>
<reference key="1">
    <citation type="journal article" date="2005" name="Genome Res.">
        <title>Sequence, annotation, and analysis of synteny between rice chromosome 3 and diverged grass species.</title>
        <authorList>
            <consortium name="The rice chromosome 3 sequencing consortium"/>
            <person name="Buell C.R."/>
            <person name="Yuan Q."/>
            <person name="Ouyang S."/>
            <person name="Liu J."/>
            <person name="Zhu W."/>
            <person name="Wang A."/>
            <person name="Maiti R."/>
            <person name="Haas B."/>
            <person name="Wortman J."/>
            <person name="Pertea M."/>
            <person name="Jones K.M."/>
            <person name="Kim M."/>
            <person name="Overton L."/>
            <person name="Tsitrin T."/>
            <person name="Fadrosh D."/>
            <person name="Bera J."/>
            <person name="Weaver B."/>
            <person name="Jin S."/>
            <person name="Johri S."/>
            <person name="Reardon M."/>
            <person name="Webb K."/>
            <person name="Hill J."/>
            <person name="Moffat K."/>
            <person name="Tallon L."/>
            <person name="Van Aken S."/>
            <person name="Lewis M."/>
            <person name="Utterback T."/>
            <person name="Feldblyum T."/>
            <person name="Zismann V."/>
            <person name="Iobst S."/>
            <person name="Hsiao J."/>
            <person name="de Vazeille A.R."/>
            <person name="Salzberg S.L."/>
            <person name="White O."/>
            <person name="Fraser C.M."/>
            <person name="Yu Y."/>
            <person name="Kim H."/>
            <person name="Rambo T."/>
            <person name="Currie J."/>
            <person name="Collura K."/>
            <person name="Kernodle-Thompson S."/>
            <person name="Wei F."/>
            <person name="Kudrna K."/>
            <person name="Ammiraju J.S.S."/>
            <person name="Luo M."/>
            <person name="Goicoechea J.L."/>
            <person name="Wing R.A."/>
            <person name="Henry D."/>
            <person name="Oates R."/>
            <person name="Palmer M."/>
            <person name="Pries G."/>
            <person name="Saski C."/>
            <person name="Simmons J."/>
            <person name="Soderlund C."/>
            <person name="Nelson W."/>
            <person name="de la Bastide M."/>
            <person name="Spiegel L."/>
            <person name="Nascimento L."/>
            <person name="Huang E."/>
            <person name="Preston R."/>
            <person name="Zutavern T."/>
            <person name="Palmer L."/>
            <person name="O'Shaughnessy A."/>
            <person name="Dike S."/>
            <person name="McCombie W.R."/>
            <person name="Minx P."/>
            <person name="Cordum H."/>
            <person name="Wilson R."/>
            <person name="Jin W."/>
            <person name="Lee H.R."/>
            <person name="Jiang J."/>
            <person name="Jackson S."/>
        </authorList>
    </citation>
    <scope>NUCLEOTIDE SEQUENCE [LARGE SCALE GENOMIC DNA]</scope>
    <source>
        <strain>cv. Nipponbare</strain>
    </source>
</reference>
<reference key="2">
    <citation type="journal article" date="2005" name="Nature">
        <title>The map-based sequence of the rice genome.</title>
        <authorList>
            <consortium name="International rice genome sequencing project (IRGSP)"/>
        </authorList>
    </citation>
    <scope>NUCLEOTIDE SEQUENCE [LARGE SCALE GENOMIC DNA]</scope>
    <source>
        <strain>cv. Nipponbare</strain>
    </source>
</reference>
<reference key="3">
    <citation type="journal article" date="2008" name="Nucleic Acids Res.">
        <title>The rice annotation project database (RAP-DB): 2008 update.</title>
        <authorList>
            <consortium name="The rice annotation project (RAP)"/>
        </authorList>
    </citation>
    <scope>GENOME REANNOTATION</scope>
    <source>
        <strain>cv. Nipponbare</strain>
    </source>
</reference>
<reference key="4">
    <citation type="journal article" date="2013" name="Rice">
        <title>Improvement of the Oryza sativa Nipponbare reference genome using next generation sequence and optical map data.</title>
        <authorList>
            <person name="Kawahara Y."/>
            <person name="de la Bastide M."/>
            <person name="Hamilton J.P."/>
            <person name="Kanamori H."/>
            <person name="McCombie W.R."/>
            <person name="Ouyang S."/>
            <person name="Schwartz D.C."/>
            <person name="Tanaka T."/>
            <person name="Wu J."/>
            <person name="Zhou S."/>
            <person name="Childs K.L."/>
            <person name="Davidson R.M."/>
            <person name="Lin H."/>
            <person name="Quesada-Ocampo L."/>
            <person name="Vaillancourt B."/>
            <person name="Sakai H."/>
            <person name="Lee S.S."/>
            <person name="Kim J."/>
            <person name="Numa H."/>
            <person name="Itoh T."/>
            <person name="Buell C.R."/>
            <person name="Matsumoto T."/>
        </authorList>
    </citation>
    <scope>GENOME REANNOTATION</scope>
    <source>
        <strain>cv. Nipponbare</strain>
    </source>
</reference>
<reference key="5">
    <citation type="journal article" date="2003" name="Science">
        <title>Collection, mapping, and annotation of over 28,000 cDNA clones from japonica rice.</title>
        <authorList>
            <consortium name="The rice full-length cDNA consortium"/>
        </authorList>
    </citation>
    <scope>NUCLEOTIDE SEQUENCE [LARGE SCALE MRNA]</scope>
    <source>
        <strain>cv. Nipponbare</strain>
    </source>
</reference>
<organism>
    <name type="scientific">Oryza sativa subsp. japonica</name>
    <name type="common">Rice</name>
    <dbReference type="NCBI Taxonomy" id="39947"/>
    <lineage>
        <taxon>Eukaryota</taxon>
        <taxon>Viridiplantae</taxon>
        <taxon>Streptophyta</taxon>
        <taxon>Embryophyta</taxon>
        <taxon>Tracheophyta</taxon>
        <taxon>Spermatophyta</taxon>
        <taxon>Magnoliopsida</taxon>
        <taxon>Liliopsida</taxon>
        <taxon>Poales</taxon>
        <taxon>Poaceae</taxon>
        <taxon>BOP clade</taxon>
        <taxon>Oryzoideae</taxon>
        <taxon>Oryzeae</taxon>
        <taxon>Oryzinae</taxon>
        <taxon>Oryza</taxon>
        <taxon>Oryza sativa</taxon>
    </lineage>
</organism>